<protein>
    <recommendedName>
        <fullName evidence="1">Catabolic 3-dehydroquinase</fullName>
        <shortName evidence="1">cDHQase</shortName>
        <ecNumber evidence="1">4.2.1.10</ecNumber>
    </recommendedName>
    <alternativeName>
        <fullName evidence="1">3-dehydroquinate dehydratase</fullName>
    </alternativeName>
</protein>
<keyword id="KW-0456">Lyase</keyword>
<keyword id="KW-0672">Quinate metabolism</keyword>
<keyword id="KW-1185">Reference proteome</keyword>
<evidence type="ECO:0000255" key="1">
    <source>
        <dbReference type="HAMAP-Rule" id="MF_03136"/>
    </source>
</evidence>
<name>3DHQ_TALMQ</name>
<comment type="function">
    <text evidence="1">Is involved in the catabolism of quinate. Allows the utilization of quinate as carbon source via the beta-ketoadipate pathway.</text>
</comment>
<comment type="catalytic activity">
    <reaction evidence="1">
        <text>3-dehydroquinate = 3-dehydroshikimate + H2O</text>
        <dbReference type="Rhea" id="RHEA:21096"/>
        <dbReference type="ChEBI" id="CHEBI:15377"/>
        <dbReference type="ChEBI" id="CHEBI:16630"/>
        <dbReference type="ChEBI" id="CHEBI:32364"/>
        <dbReference type="EC" id="4.2.1.10"/>
    </reaction>
</comment>
<comment type="pathway">
    <text evidence="1">Aromatic compound metabolism; 3,4-dihydroxybenzoate biosynthesis; 3,4-dihydroxybenzoate from 3-dehydroquinate: step 1/2.</text>
</comment>
<comment type="subunit">
    <text evidence="1">Homododecamer. Adopts a ring-like structure, composed of an arrangement of two hexameric rings stacked on top of one another.</text>
</comment>
<comment type="similarity">
    <text evidence="1">Belongs to the type-II 3-dehydroquinase family.</text>
</comment>
<feature type="chain" id="PRO_0000402372" description="Catabolic 3-dehydroquinase">
    <location>
        <begin position="1"/>
        <end position="175"/>
    </location>
</feature>
<feature type="active site" description="Proton acceptor" evidence="1">
    <location>
        <position position="23"/>
    </location>
</feature>
<feature type="active site" description="Proton donor" evidence="1">
    <location>
        <position position="100"/>
    </location>
</feature>
<feature type="binding site" evidence="1">
    <location>
        <position position="74"/>
    </location>
    <ligand>
        <name>substrate</name>
    </ligand>
</feature>
<feature type="binding site" evidence="1">
    <location>
        <position position="80"/>
    </location>
    <ligand>
        <name>substrate</name>
    </ligand>
</feature>
<feature type="binding site" evidence="1">
    <location>
        <position position="87"/>
    </location>
    <ligand>
        <name>substrate</name>
    </ligand>
</feature>
<feature type="binding site" evidence="1">
    <location>
        <begin position="101"/>
        <end position="102"/>
    </location>
    <ligand>
        <name>substrate</name>
    </ligand>
</feature>
<feature type="binding site" evidence="1">
    <location>
        <position position="111"/>
    </location>
    <ligand>
        <name>substrate</name>
    </ligand>
</feature>
<feature type="site" description="Transition state stabilizer" evidence="1">
    <location>
        <position position="18"/>
    </location>
</feature>
<dbReference type="EC" id="4.2.1.10" evidence="1"/>
<dbReference type="EMBL" id="DS995899">
    <property type="protein sequence ID" value="EEA29087.1"/>
    <property type="molecule type" value="Genomic_DNA"/>
</dbReference>
<dbReference type="RefSeq" id="XP_002145602.1">
    <property type="nucleotide sequence ID" value="XM_002145566.1"/>
</dbReference>
<dbReference type="SMR" id="B6Q3C6"/>
<dbReference type="STRING" id="441960.B6Q3C6"/>
<dbReference type="VEuPathDB" id="FungiDB:PMAA_038690"/>
<dbReference type="HOGENOM" id="CLU_090968_1_0_1"/>
<dbReference type="OrthoDB" id="3785at28568"/>
<dbReference type="PhylomeDB" id="B6Q3C6"/>
<dbReference type="UniPathway" id="UPA00088">
    <property type="reaction ID" value="UER00178"/>
</dbReference>
<dbReference type="Proteomes" id="UP000001294">
    <property type="component" value="Unassembled WGS sequence"/>
</dbReference>
<dbReference type="GO" id="GO:0003855">
    <property type="term" value="F:3-dehydroquinate dehydratase activity"/>
    <property type="evidence" value="ECO:0007669"/>
    <property type="project" value="UniProtKB-UniRule"/>
</dbReference>
<dbReference type="GO" id="GO:0046279">
    <property type="term" value="P:3,4-dihydroxybenzoate biosynthetic process"/>
    <property type="evidence" value="ECO:0007669"/>
    <property type="project" value="UniProtKB-UniRule"/>
</dbReference>
<dbReference type="GO" id="GO:0019631">
    <property type="term" value="P:quinate catabolic process"/>
    <property type="evidence" value="ECO:0007669"/>
    <property type="project" value="TreeGrafter"/>
</dbReference>
<dbReference type="CDD" id="cd00466">
    <property type="entry name" value="DHQase_II"/>
    <property type="match status" value="1"/>
</dbReference>
<dbReference type="Gene3D" id="3.40.50.9100">
    <property type="entry name" value="Dehydroquinase, class II"/>
    <property type="match status" value="1"/>
</dbReference>
<dbReference type="HAMAP" id="MF_00169">
    <property type="entry name" value="AroQ"/>
    <property type="match status" value="1"/>
</dbReference>
<dbReference type="InterPro" id="IPR001874">
    <property type="entry name" value="DHquinase_II"/>
</dbReference>
<dbReference type="InterPro" id="IPR018509">
    <property type="entry name" value="DHquinase_II_CS"/>
</dbReference>
<dbReference type="InterPro" id="IPR036441">
    <property type="entry name" value="DHquinase_II_sf"/>
</dbReference>
<dbReference type="NCBIfam" id="TIGR01088">
    <property type="entry name" value="aroQ"/>
    <property type="match status" value="1"/>
</dbReference>
<dbReference type="NCBIfam" id="NF003804">
    <property type="entry name" value="PRK05395.1-1"/>
    <property type="match status" value="1"/>
</dbReference>
<dbReference type="NCBIfam" id="NF003805">
    <property type="entry name" value="PRK05395.1-2"/>
    <property type="match status" value="1"/>
</dbReference>
<dbReference type="NCBIfam" id="NF003806">
    <property type="entry name" value="PRK05395.1-3"/>
    <property type="match status" value="1"/>
</dbReference>
<dbReference type="NCBIfam" id="NF003807">
    <property type="entry name" value="PRK05395.1-4"/>
    <property type="match status" value="1"/>
</dbReference>
<dbReference type="PANTHER" id="PTHR21272">
    <property type="entry name" value="CATABOLIC 3-DEHYDROQUINASE"/>
    <property type="match status" value="1"/>
</dbReference>
<dbReference type="PANTHER" id="PTHR21272:SF3">
    <property type="entry name" value="CATABOLIC 3-DEHYDROQUINASE"/>
    <property type="match status" value="1"/>
</dbReference>
<dbReference type="Pfam" id="PF01220">
    <property type="entry name" value="DHquinase_II"/>
    <property type="match status" value="1"/>
</dbReference>
<dbReference type="SUPFAM" id="SSF52304">
    <property type="entry name" value="Type II 3-dehydroquinate dehydratase"/>
    <property type="match status" value="1"/>
</dbReference>
<dbReference type="PROSITE" id="PS01029">
    <property type="entry name" value="DEHYDROQUINASE_II"/>
    <property type="match status" value="1"/>
</dbReference>
<organism>
    <name type="scientific">Talaromyces marneffei (strain ATCC 18224 / CBS 334.59 / QM 7333)</name>
    <name type="common">Penicillium marneffei</name>
    <dbReference type="NCBI Taxonomy" id="441960"/>
    <lineage>
        <taxon>Eukaryota</taxon>
        <taxon>Fungi</taxon>
        <taxon>Dikarya</taxon>
        <taxon>Ascomycota</taxon>
        <taxon>Pezizomycotina</taxon>
        <taxon>Eurotiomycetes</taxon>
        <taxon>Eurotiomycetidae</taxon>
        <taxon>Eurotiales</taxon>
        <taxon>Trichocomaceae</taxon>
        <taxon>Talaromyces</taxon>
        <taxon>Talaromyces sect. Talaromyces</taxon>
    </lineage>
</organism>
<reference key="1">
    <citation type="journal article" date="2015" name="Genome Announc.">
        <title>Genome sequence of the AIDS-associated pathogen Penicillium marneffei (ATCC18224) and its near taxonomic relative Talaromyces stipitatus (ATCC10500).</title>
        <authorList>
            <person name="Nierman W.C."/>
            <person name="Fedorova-Abrams N.D."/>
            <person name="Andrianopoulos A."/>
        </authorList>
    </citation>
    <scope>NUCLEOTIDE SEQUENCE [LARGE SCALE GENOMIC DNA]</scope>
    <source>
        <strain>ATCC 18224 / CBS 334.59 / QM 7333</strain>
    </source>
</reference>
<sequence>MPTILILNGPNLNLLGLREPHIYGSTTLQDVENICIELGKQHNVTVDAFQSNHEGQLIDRIHEARNKVDLIVINPAAYTHTSVAIRDALLGVSIPFIEVHISNVHAREQWRHHSYFSDKAVACIVGLGTFGYEAAIQHATLKQFKDLTFRYKRGDYGEVIYYYESLPNPILVVVL</sequence>
<gene>
    <name evidence="1" type="primary">qutE</name>
    <name type="ORF">PMAA_038690</name>
</gene>
<accession>B6Q3C6</accession>
<proteinExistence type="inferred from homology"/>